<keyword id="KW-0002">3D-structure</keyword>
<keyword id="KW-0106">Calcium</keyword>
<keyword id="KW-0903">Direct protein sequencing</keyword>
<keyword id="KW-1015">Disulfide bond</keyword>
<keyword id="KW-0348">Hemagglutinin</keyword>
<keyword id="KW-0430">Lectin</keyword>
<keyword id="KW-0479">Metal-binding</keyword>
<keyword id="KW-0964">Secreted</keyword>
<keyword id="KW-0732">Signal</keyword>
<evidence type="ECO:0000250" key="1">
    <source>
        <dbReference type="UniProtKB" id="P21963"/>
    </source>
</evidence>
<evidence type="ECO:0000255" key="2">
    <source>
        <dbReference type="PROSITE-ProRule" id="PRU00040"/>
    </source>
</evidence>
<evidence type="ECO:0000269" key="3">
    <source>
    </source>
</evidence>
<evidence type="ECO:0000269" key="4">
    <source>
    </source>
</evidence>
<evidence type="ECO:0000269" key="5">
    <source>
    </source>
</evidence>
<evidence type="ECO:0000269" key="6">
    <source>
    </source>
</evidence>
<evidence type="ECO:0000269" key="7">
    <source>
    </source>
</evidence>
<evidence type="ECO:0000269" key="8">
    <source>
    </source>
</evidence>
<evidence type="ECO:0000269" key="9">
    <source ref="5"/>
</evidence>
<evidence type="ECO:0000303" key="10">
    <source>
    </source>
</evidence>
<evidence type="ECO:0000303" key="11">
    <source>
    </source>
</evidence>
<evidence type="ECO:0000305" key="12"/>
<evidence type="ECO:0000305" key="13">
    <source>
    </source>
</evidence>
<evidence type="ECO:0000305" key="14">
    <source>
    </source>
</evidence>
<evidence type="ECO:0000305" key="15">
    <source ref="5"/>
</evidence>
<evidence type="ECO:0007744" key="16">
    <source>
        <dbReference type="PDB" id="5F2Q"/>
    </source>
</evidence>
<evidence type="ECO:0007829" key="17">
    <source>
        <dbReference type="PDB" id="5F2Q"/>
    </source>
</evidence>
<name>LECG_BOTJR</name>
<protein>
    <recommendedName>
        <fullName evidence="10 11">C-type lectin BJcuL</fullName>
        <shortName>CTL</shortName>
    </recommendedName>
    <alternativeName>
        <fullName>Galactose-specific lectin</fullName>
    </alternativeName>
    <alternativeName>
        <fullName evidence="11">Snake venom galactoside-binding lectin</fullName>
        <shortName evidence="11">SVgalL</shortName>
    </alternativeName>
</protein>
<organism>
    <name type="scientific">Bothrops jararacussu</name>
    <name type="common">Jararacussu</name>
    <dbReference type="NCBI Taxonomy" id="8726"/>
    <lineage>
        <taxon>Eukaryota</taxon>
        <taxon>Metazoa</taxon>
        <taxon>Chordata</taxon>
        <taxon>Craniata</taxon>
        <taxon>Vertebrata</taxon>
        <taxon>Euteleostomi</taxon>
        <taxon>Lepidosauria</taxon>
        <taxon>Squamata</taxon>
        <taxon>Bifurcata</taxon>
        <taxon>Unidentata</taxon>
        <taxon>Episquamata</taxon>
        <taxon>Toxicofera</taxon>
        <taxon>Serpentes</taxon>
        <taxon>Colubroidea</taxon>
        <taxon>Viperidae</taxon>
        <taxon>Crotalinae</taxon>
        <taxon>Bothrops</taxon>
    </lineage>
</organism>
<comment type="function">
    <text evidence="3 4 7 9">Galactose-binding lectin which recognizes specific carbohydrate structures and agglutinates a variety of animal cells by binding to cell-surface glycoproteins and glycolipids. Calcium-dependent lectin. Also binds lactose and raffinose (PubMed:28003128). Shows high hemagglutinating activity on mammalian erythrocytes (PubMed:16309723, Ref.5). It also involved in immunological functions, since it is able of inducing potent neutrophil activation (PubMed:16309723, PubMed:21266049). In vivo, it causes edema and increases vascular permeability after injection into mouse hind paws (10-100 ug/paw). In anesthetized rats, it decreases the blood pressure by approximately 15%, with a rapid return to the resting level (PubMed:16309723). Is an effective inhibitor of cell growth in some cancer cell lines, especially against renal and pancreatic cancer cell lines, human breast and ovarian carcinoma, glioblastoma and a bovine brain microvascular endothelial cell line (PubMed:10628348, PubMed:11478954).</text>
</comment>
<comment type="activity regulation">
    <text evidence="7 8 9">Hemagglutination activity is inhibited by lactose (MIC=2.5 mM), galactose (MIC=10 mM), and raffinose (PubMed:16309723, PubMed:28003128, Ref.5). Is very weakly or not inhibited by gentamicin, kanamycin, glucose and sucrose (PubMed:16309723, PubMed:28003128).</text>
</comment>
<comment type="subunit">
    <text evidence="8 15">Homodecamer of disulfide-linked dimers arranged in two 5-fold symmetric pentamers (PubMed:28003128, Ref.5). Binds the gentamicin group of aminoglycoside antibiotics at the dimeric interface near the intermolecular disulfide bond (PubMed:28003128).</text>
</comment>
<comment type="subcellular location">
    <subcellularLocation>
        <location evidence="9">Secreted</location>
    </subcellularLocation>
</comment>
<comment type="tissue specificity">
    <text evidence="15">Expressed by the venom gland.</text>
</comment>
<comment type="biotechnology">
    <text evidence="14">Can be used in the treatment of bovine mastitis, since it is able to both inhibit bacterial biofilm growth, and disrupt existing biofilm, without affecting bacterial cell viability.</text>
</comment>
<comment type="miscellaneous">
    <text evidence="13">Negative results: the lectin (up to 200 microg/ml) does not aggregate human platelet-rich plasma (PRP) or washed platelets (WP), nor does it alter the aggregation induced by ADP in PRP or by thrombin in WP.</text>
</comment>
<comment type="similarity">
    <text evidence="12">Belongs to the true venom lectin family.</text>
</comment>
<comment type="sequence caution" evidence="12">
    <conflict type="erroneous initiation">
        <sequence resource="EMBL-CDS" id="AAP42417"/>
    </conflict>
    <text>Truncated N-terminus.</text>
</comment>
<feature type="signal peptide" evidence="5 6 9">
    <location>
        <begin position="1"/>
        <end position="24"/>
    </location>
</feature>
<feature type="chain" id="PRO_0000046643" description="C-type lectin BJcuL" evidence="5">
    <location>
        <begin position="25"/>
        <end position="159"/>
    </location>
</feature>
<feature type="domain" description="C-type lectin" evidence="2">
    <location>
        <begin position="34"/>
        <end position="156"/>
    </location>
</feature>
<feature type="short sequence motif" description="Galactose-binding" evidence="1">
    <location>
        <begin position="120"/>
        <end position="122"/>
    </location>
</feature>
<feature type="binding site" evidence="8 16">
    <location>
        <position position="120"/>
    </location>
    <ligand>
        <name>Ca(2+)</name>
        <dbReference type="ChEBI" id="CHEBI:29108"/>
    </ligand>
</feature>
<feature type="binding site" evidence="8 16">
    <location>
        <position position="122"/>
    </location>
    <ligand>
        <name>Ca(2+)</name>
        <dbReference type="ChEBI" id="CHEBI:29108"/>
    </ligand>
</feature>
<feature type="binding site" evidence="8 16">
    <location>
        <position position="128"/>
    </location>
    <ligand>
        <name>Ca(2+)</name>
        <dbReference type="ChEBI" id="CHEBI:29108"/>
    </ligand>
</feature>
<feature type="binding site" evidence="8 16">
    <location>
        <position position="143"/>
    </location>
    <ligand>
        <name>Ca(2+)</name>
        <dbReference type="ChEBI" id="CHEBI:29108"/>
    </ligand>
</feature>
<feature type="binding site" evidence="8 16">
    <location>
        <position position="144"/>
    </location>
    <ligand>
        <name>Ca(2+)</name>
        <dbReference type="ChEBI" id="CHEBI:29108"/>
    </ligand>
</feature>
<feature type="site" description="Binds aminoglycoside antibiotics (subunit E')" evidence="8">
    <location>
        <position position="103"/>
    </location>
</feature>
<feature type="site" description="Binds aminoglycoside antibiotics (subunit A and E')" evidence="8">
    <location>
        <position position="104"/>
    </location>
</feature>
<feature type="site" description="Binds aminoglycoside antibiotics (subunit A)" evidence="8">
    <location>
        <position position="105"/>
    </location>
</feature>
<feature type="site" description="Binds aminoglycoside antibiotics (subunit A)" evidence="8">
    <location>
        <position position="109"/>
    </location>
</feature>
<feature type="site" description="Binds aminoglycoside antibiotics (subunit A and E')" evidence="8">
    <location>
        <position position="111"/>
    </location>
</feature>
<feature type="disulfide bond" evidence="8 16">
    <location>
        <begin position="27"/>
        <end position="38"/>
    </location>
</feature>
<feature type="disulfide bond" evidence="8 16">
    <location>
        <begin position="55"/>
        <end position="155"/>
    </location>
</feature>
<feature type="disulfide bond" evidence="8 16">
    <location>
        <begin position="62"/>
        <end position="157"/>
    </location>
</feature>
<feature type="disulfide bond" description="Interchain" evidence="8">
    <location>
        <position position="110"/>
    </location>
</feature>
<feature type="disulfide bond" evidence="8 16">
    <location>
        <begin position="130"/>
        <end position="147"/>
    </location>
</feature>
<feature type="sequence conflict" description="In Ref. 3; AA sequence and 4; AA sequence." evidence="12" ref="3 4">
    <original>N</original>
    <variation>D</variation>
    <location>
        <position position="43"/>
    </location>
</feature>
<feature type="sequence conflict" description="In Ref. 3; AA sequence." evidence="12" ref="3">
    <original>S</original>
    <variation>A</variation>
    <location>
        <position position="88"/>
    </location>
</feature>
<feature type="sequence conflict" description="In Ref. 3; AA sequence." evidence="12" ref="3">
    <original>C</original>
    <variation>Q</variation>
    <location>
        <position position="95"/>
    </location>
</feature>
<feature type="sequence conflict" description="In Ref. 3; AA sequence." evidence="12" ref="3">
    <original>N</original>
    <variation>L</variation>
    <location>
        <position position="136"/>
    </location>
</feature>
<feature type="sequence conflict" description="In Ref. 3; AA sequence." evidence="12" ref="3">
    <original>N</original>
    <variation>E</variation>
    <location>
        <position position="143"/>
    </location>
</feature>
<feature type="sequence conflict" description="In Ref. 1; AAQ92957." evidence="12" ref="1">
    <original>Q</original>
    <variation>H</variation>
    <location>
        <position position="156"/>
    </location>
</feature>
<feature type="sequence conflict" description="In Ref. 1; AAQ92957." evidence="12" ref="1">
    <original>F</original>
    <variation>LGTSSKG</variation>
    <location>
        <position position="159"/>
    </location>
</feature>
<feature type="strand" evidence="17">
    <location>
        <begin position="31"/>
        <end position="34"/>
    </location>
</feature>
<feature type="strand" evidence="17">
    <location>
        <begin position="37"/>
        <end position="47"/>
    </location>
</feature>
<feature type="helix" evidence="17">
    <location>
        <begin position="48"/>
        <end position="58"/>
    </location>
</feature>
<feature type="strand" evidence="17">
    <location>
        <begin position="59"/>
        <end position="64"/>
    </location>
</feature>
<feature type="helix" evidence="17">
    <location>
        <begin position="72"/>
        <end position="83"/>
    </location>
</feature>
<feature type="strand" evidence="17">
    <location>
        <begin position="90"/>
        <end position="101"/>
    </location>
</feature>
<feature type="strand" evidence="17">
    <location>
        <begin position="103"/>
        <end position="105"/>
    </location>
</feature>
<feature type="helix" evidence="17">
    <location>
        <begin position="124"/>
        <end position="126"/>
    </location>
</feature>
<feature type="strand" evidence="17">
    <location>
        <begin position="128"/>
        <end position="133"/>
    </location>
</feature>
<feature type="helix" evidence="17">
    <location>
        <begin position="135"/>
        <end position="137"/>
    </location>
</feature>
<feature type="strand" evidence="17">
    <location>
        <begin position="141"/>
        <end position="146"/>
    </location>
</feature>
<feature type="strand" evidence="17">
    <location>
        <begin position="149"/>
        <end position="157"/>
    </location>
</feature>
<reference key="1">
    <citation type="journal article" date="2004" name="Protein Expr. Purif.">
        <title>Cloning, expression, and structural analysis of recombinant BJcuL, a c-type lectin from the Bothrops jararacussu snake venom.</title>
        <authorList>
            <person name="Kassab B.H."/>
            <person name="de Carvalho D.D."/>
            <person name="Oliveira M.A."/>
            <person name="Baptista G.R."/>
            <person name="Pereira G.A."/>
            <person name="Novello J.C."/>
        </authorList>
    </citation>
    <scope>NUCLEOTIDE SEQUENCE [MRNA]</scope>
    <source>
        <tissue>Venom gland</tissue>
    </source>
</reference>
<reference key="2">
    <citation type="journal article" date="2004" name="Biochimie">
        <title>Analysis of Bothrops jararacussu venomous gland transcriptome focusing on structural and functional aspects: I -- gene expression profile of highly expressed phospholipases A2.</title>
        <authorList>
            <person name="Kashima S."/>
            <person name="Roberto P.G."/>
            <person name="Soares A.M."/>
            <person name="Astolfi-Filho S."/>
            <person name="Pereira J.O."/>
            <person name="Giuliati S."/>
            <person name="Faria M. Jr."/>
            <person name="Xavier M.A.S."/>
            <person name="Fontes M.R.M."/>
            <person name="Giglio J.R."/>
            <person name="Franca S.C."/>
        </authorList>
    </citation>
    <scope>NUCLEOTIDE SEQUENCE [MRNA] OF 15-159</scope>
    <source>
        <tissue>Venom gland</tissue>
    </source>
</reference>
<reference key="3">
    <citation type="journal article" date="2002" name="J. Protein Chem.">
        <title>Primary structure characterization of Bothrops jararacussu snake venom lectin.</title>
        <authorList>
            <person name="de Carvalho D.D."/>
            <person name="Marangoni S."/>
            <person name="Novello J.C."/>
        </authorList>
    </citation>
    <scope>PROTEIN SEQUENCE OF 25-159</scope>
    <source>
        <tissue>Venom</tissue>
    </source>
</reference>
<reference key="4">
    <citation type="journal article" date="2005" name="J. Chromatogr. B">
        <title>Biochemical and molecular modeling analysis of the ability of two p-aminobenzamidine-based sorbents to selectively purify serine proteases (fibrinogenases) from snake venoms.</title>
        <authorList>
            <person name="De-Simone S.G."/>
            <person name="Correa-Netto C."/>
            <person name="Antunes O.A."/>
            <person name="De-Alencastro R.B."/>
            <person name="Silva F.P. Jr."/>
        </authorList>
    </citation>
    <scope>PROTEIN SEQUENCE OF 25-44</scope>
    <source>
        <tissue>Venom</tissue>
    </source>
</reference>
<reference key="5">
    <citation type="journal article" date="1998" name="Biochem. Mol. Biol. Int.">
        <title>Isolation and characterization of a new lectin from the venom of the snake Bothrops jararacussu.</title>
        <authorList>
            <person name="de Carvalho D.D."/>
            <person name="Marangoni S."/>
            <person name="Oliveira B."/>
            <person name="Novello J.C."/>
        </authorList>
    </citation>
    <scope>PROTEIN SEQUENCE OF 25-32</scope>
    <scope>FUNCTION</scope>
    <scope>SUBUNIT</scope>
    <scope>SUBCELLULAR LOCATION</scope>
    <scope>ACTIVITY REGULATION</scope>
    <source>
        <tissue>Venom</tissue>
    </source>
</reference>
<reference key="6">
    <citation type="journal article" date="1999" name="Anticancer Res.">
        <title>The effect of a lectin from the venom of the snake, Bothrops jararacussu, on tumor cell proliferation.</title>
        <authorList>
            <person name="Pereira-Bittencourt M."/>
            <person name="de Carvalho D.D."/>
            <person name="Gagliardi A.R."/>
            <person name="Collins D.C."/>
        </authorList>
    </citation>
    <scope>FUNCTION ON TUMOR CELLS</scope>
</reference>
<reference key="7">
    <citation type="journal article" date="2001" name="Toxicon">
        <title>Effect of BJcuL (a lectin from the venom of the snake Bothrops jararacussu) on adhesion and growth of tumor and endothelial cells.</title>
        <authorList>
            <person name="de Carvalho D.D."/>
            <person name="Schmitmeier S."/>
            <person name="Novello J.C."/>
            <person name="Markland F.S."/>
        </authorList>
    </citation>
    <scope>FUNCTION ON TUMOR CELLS</scope>
</reference>
<reference key="8">
    <citation type="journal article" date="2011" name="BMC Immunol.">
        <title>Human neutrophil migration and activation by BJcuL, a galactose binding lectin purified from Bothrops jararacussu venom.</title>
        <authorList>
            <person name="Elifio-Esposito S."/>
            <person name="Tomazeli L."/>
            <person name="Schwartz C."/>
            <person name="Gimenez A.P."/>
            <person name="Fugii G.M."/>
            <person name="Fernandes L.C."/>
            <person name="Zishler L.F."/>
            <person name="Stuelp-Campelo P.M."/>
            <person name="Moreno A.N."/>
        </authorList>
    </citation>
    <scope>FUNCTION</scope>
</reference>
<reference key="9">
    <citation type="journal article" date="2015" name="PLoS ONE">
        <title>A C-type lectin from Bothrops jararacussu venom disrupts Staphylococcal biofilms.</title>
        <authorList>
            <person name="Klein R.C."/>
            <person name="Fabres-Klein M.H."/>
            <person name="de Oliveira L.L."/>
            <person name="Feio R.N."/>
            <person name="Malouin F."/>
            <person name="Ribon A.O."/>
        </authorList>
    </citation>
    <scope>IDENTIFICATION BY MASS SPECTROMETRY</scope>
    <scope>BIOTECHNOLOGY</scope>
    <source>
        <tissue>Venom</tissue>
    </source>
</reference>
<reference key="10">
    <citation type="journal article" date="2006" name="Toxicon">
        <title>Biological activities of a lectin from Bothrops jararacussu snake venom.</title>
        <authorList>
            <person name="Panunto P.C."/>
            <person name="da Silva M.A."/>
            <person name="Linardi A."/>
            <person name="Buzin M.P."/>
            <person name="Melo S.E."/>
            <person name="Mello S.M."/>
            <person name="Prado-Franceschi J."/>
            <person name="Hyslop S."/>
        </authorList>
    </citation>
    <scope>FUNCTION</scope>
    <scope>BIOASSAY</scope>
    <scope>ACTIVITY REGULATION</scope>
    <source>
        <tissue>Venom</tissue>
    </source>
</reference>
<reference key="11">
    <citation type="journal article" date="2017" name="Toxicon">
        <title>Structural and binding studies of a C-type galactose-binding lectin from Bothrops jararacussu snake venom.</title>
        <authorList>
            <person name="Sartim M.A."/>
            <person name="Pinheiro M.P."/>
            <person name="de Padua R.A.P."/>
            <person name="Sampaio S.V."/>
            <person name="Nonato M.C."/>
        </authorList>
    </citation>
    <scope>X-RAY CRYSTALLOGRAPHY (2.95 ANGSTROMS) OF 26-159 (HOMODECAMER) IN COMPLEX WITH AMINOGLYCOSIDE ANTIBIOTICS</scope>
    <scope>FUNCTION</scope>
    <scope>METAL-BINDING SITES</scope>
    <scope>SUBUNIT</scope>
    <scope>DISULFIDE BOND</scope>
    <scope>ACTIVITY REGULATION</scope>
    <source>
        <tissue>Venom</tissue>
    </source>
</reference>
<dbReference type="EMBL" id="AY388642">
    <property type="protein sequence ID" value="AAQ92957.1"/>
    <property type="molecule type" value="mRNA"/>
</dbReference>
<dbReference type="EMBL" id="AY251283">
    <property type="protein sequence ID" value="AAP42417.1"/>
    <property type="status" value="ALT_INIT"/>
    <property type="molecule type" value="mRNA"/>
</dbReference>
<dbReference type="PDB" id="5F2Q">
    <property type="method" value="X-ray"/>
    <property type="resolution" value="2.95 A"/>
    <property type="chains" value="A/B/C/D/E/F/G/H/I/J=25-159"/>
</dbReference>
<dbReference type="PDBsum" id="5F2Q"/>
<dbReference type="SMR" id="P83519"/>
<dbReference type="GO" id="GO:0005576">
    <property type="term" value="C:extracellular region"/>
    <property type="evidence" value="ECO:0007669"/>
    <property type="project" value="UniProtKB-SubCell"/>
</dbReference>
<dbReference type="GO" id="GO:0030246">
    <property type="term" value="F:carbohydrate binding"/>
    <property type="evidence" value="ECO:0007669"/>
    <property type="project" value="UniProtKB-KW"/>
</dbReference>
<dbReference type="GO" id="GO:0046872">
    <property type="term" value="F:metal ion binding"/>
    <property type="evidence" value="ECO:0007669"/>
    <property type="project" value="UniProtKB-KW"/>
</dbReference>
<dbReference type="GO" id="GO:0030308">
    <property type="term" value="P:negative regulation of cell growth"/>
    <property type="evidence" value="ECO:0000304"/>
    <property type="project" value="UniProtKB"/>
</dbReference>
<dbReference type="CDD" id="cd03594">
    <property type="entry name" value="CLECT_REG-1_like"/>
    <property type="match status" value="1"/>
</dbReference>
<dbReference type="FunFam" id="3.10.100.10:FF:000015">
    <property type="entry name" value="C-type lectin Cal"/>
    <property type="match status" value="1"/>
</dbReference>
<dbReference type="Gene3D" id="3.10.100.10">
    <property type="entry name" value="Mannose-Binding Protein A, subunit A"/>
    <property type="match status" value="1"/>
</dbReference>
<dbReference type="InterPro" id="IPR001304">
    <property type="entry name" value="C-type_lectin-like"/>
</dbReference>
<dbReference type="InterPro" id="IPR016186">
    <property type="entry name" value="C-type_lectin-like/link_sf"/>
</dbReference>
<dbReference type="InterPro" id="IPR050111">
    <property type="entry name" value="C-type_lectin/snaclec_domain"/>
</dbReference>
<dbReference type="InterPro" id="IPR018378">
    <property type="entry name" value="C-type_lectin_CS"/>
</dbReference>
<dbReference type="InterPro" id="IPR016187">
    <property type="entry name" value="CTDL_fold"/>
</dbReference>
<dbReference type="PANTHER" id="PTHR22803">
    <property type="entry name" value="MANNOSE, PHOSPHOLIPASE, LECTIN RECEPTOR RELATED"/>
    <property type="match status" value="1"/>
</dbReference>
<dbReference type="Pfam" id="PF00059">
    <property type="entry name" value="Lectin_C"/>
    <property type="match status" value="1"/>
</dbReference>
<dbReference type="PRINTS" id="PR01504">
    <property type="entry name" value="PNCREATITSAP"/>
</dbReference>
<dbReference type="SMART" id="SM00034">
    <property type="entry name" value="CLECT"/>
    <property type="match status" value="1"/>
</dbReference>
<dbReference type="SUPFAM" id="SSF56436">
    <property type="entry name" value="C-type lectin-like"/>
    <property type="match status" value="1"/>
</dbReference>
<dbReference type="PROSITE" id="PS00615">
    <property type="entry name" value="C_TYPE_LECTIN_1"/>
    <property type="match status" value="1"/>
</dbReference>
<dbReference type="PROSITE" id="PS50041">
    <property type="entry name" value="C_TYPE_LECTIN_2"/>
    <property type="match status" value="1"/>
</dbReference>
<proteinExistence type="evidence at protein level"/>
<accession>P83519</accession>
<accession>Q6TRS6</accession>
<accession>Q7T228</accession>
<sequence length="159" mass="18653">MGRFLFVASSACWFVFLSLSGAKGNNCPQDWLPMNGLCYKIFNELKAWKDAEMFCRKYKPGCHLASIHLYGESPEIAEYISDYHKGQSEVWIGLCDKKKDFSWEWTDRSCTDYLSWDKNQPDHYQNKEFCVELVSNTGYRLWNDQVCESKNAFLCQCKF</sequence>